<protein>
    <recommendedName>
        <fullName evidence="2">Small ribosomal subunit protein cS23</fullName>
    </recommendedName>
    <alternativeName>
        <fullName>30S ribosomal protein 3, chloroplastic</fullName>
        <shortName>PSRP-3</shortName>
    </alternativeName>
</protein>
<keyword id="KW-0150">Chloroplast</keyword>
<keyword id="KW-0934">Plastid</keyword>
<keyword id="KW-0687">Ribonucleoprotein</keyword>
<keyword id="KW-0689">Ribosomal protein</keyword>
<proteinExistence type="inferred from homology"/>
<organism>
    <name type="scientific">Euglena myxocylindracea</name>
    <dbReference type="NCBI Taxonomy" id="38276"/>
    <lineage>
        <taxon>Eukaryota</taxon>
        <taxon>Discoba</taxon>
        <taxon>Euglenozoa</taxon>
        <taxon>Euglenida</taxon>
        <taxon>Spirocuta</taxon>
        <taxon>Euglenophyceae</taxon>
        <taxon>Euglenales</taxon>
        <taxon>Euglenaceae</taxon>
        <taxon>Euglena</taxon>
    </lineage>
</organism>
<dbReference type="EMBL" id="AF347932">
    <property type="protein sequence ID" value="AAK27693.1"/>
    <property type="molecule type" value="Genomic_DNA"/>
</dbReference>
<dbReference type="SMR" id="Q9BAC2"/>
<dbReference type="GO" id="GO:0009507">
    <property type="term" value="C:chloroplast"/>
    <property type="evidence" value="ECO:0007669"/>
    <property type="project" value="UniProtKB-SubCell"/>
</dbReference>
<dbReference type="GO" id="GO:1990904">
    <property type="term" value="C:ribonucleoprotein complex"/>
    <property type="evidence" value="ECO:0007669"/>
    <property type="project" value="UniProtKB-KW"/>
</dbReference>
<dbReference type="GO" id="GO:0005840">
    <property type="term" value="C:ribosome"/>
    <property type="evidence" value="ECO:0007669"/>
    <property type="project" value="UniProtKB-KW"/>
</dbReference>
<dbReference type="GO" id="GO:0003735">
    <property type="term" value="F:structural constituent of ribosome"/>
    <property type="evidence" value="ECO:0007669"/>
    <property type="project" value="InterPro"/>
</dbReference>
<dbReference type="GO" id="GO:0006412">
    <property type="term" value="P:translation"/>
    <property type="evidence" value="ECO:0007669"/>
    <property type="project" value="UniProtKB-UniRule"/>
</dbReference>
<dbReference type="Gene3D" id="3.30.390.140">
    <property type="match status" value="1"/>
</dbReference>
<dbReference type="HAMAP" id="MF_00619">
    <property type="entry name" value="Ribosomal_plastid_cS23"/>
    <property type="match status" value="1"/>
</dbReference>
<dbReference type="InterPro" id="IPR038447">
    <property type="entry name" value="PSRP-3/Ycf65_sf"/>
</dbReference>
<dbReference type="InterPro" id="IPR006924">
    <property type="entry name" value="Ribosomal_PSRP3/Ycf65"/>
</dbReference>
<dbReference type="PANTHER" id="PTHR35108">
    <property type="entry name" value="30S RIBOSOMAL PROTEIN 3, CHLOROPLASTIC"/>
    <property type="match status" value="1"/>
</dbReference>
<dbReference type="PANTHER" id="PTHR35108:SF1">
    <property type="entry name" value="OS04G0461100 PROTEIN"/>
    <property type="match status" value="1"/>
</dbReference>
<dbReference type="Pfam" id="PF04839">
    <property type="entry name" value="PSRP-3_Ycf65"/>
    <property type="match status" value="1"/>
</dbReference>
<geneLocation type="chloroplast"/>
<gene>
    <name type="primary">ycf65</name>
</gene>
<reference key="1">
    <citation type="submission" date="2001-02" db="EMBL/GenBank/DDBJ databases">
        <title>An evolutionary study of ycf65 in Euglena chloroplasts.</title>
        <authorList>
            <person name="Hallick R.B."/>
            <person name="De Armond R.L."/>
        </authorList>
    </citation>
    <scope>NUCLEOTIDE SEQUENCE [GENOMIC DNA]</scope>
</reference>
<evidence type="ECO:0000250" key="1"/>
<evidence type="ECO:0000255" key="2">
    <source>
        <dbReference type="HAMAP-Rule" id="MF_00619"/>
    </source>
</evidence>
<evidence type="ECO:0000305" key="3"/>
<sequence length="101" mass="12163">MQKFVWKVVCLENKIAICLDQQLADKTSPVTEYFFWPQSDAWDELNKLLESKPWITLSNRIFVLNILTDLINYWDEKKSFDQSDWPLLKEKFPDVVFIYIK</sequence>
<comment type="function">
    <text evidence="1">Probably a ribosomal protein or a ribosome-associated protein.</text>
</comment>
<comment type="subunit">
    <text evidence="1">Part of the 30S ribosomal subunit.</text>
</comment>
<comment type="subcellular location">
    <subcellularLocation>
        <location>Plastid</location>
        <location>Chloroplast</location>
    </subcellularLocation>
</comment>
<comment type="similarity">
    <text evidence="3">Belongs to the chloroplast-specific ribosomal protein cS23 family.</text>
</comment>
<feature type="chain" id="PRO_0000216758" description="Small ribosomal subunit protein cS23">
    <location>
        <begin position="1"/>
        <end position="101"/>
    </location>
</feature>
<name>RRP3_EUGMY</name>
<accession>Q9BAC2</accession>